<accession>Q5ZML9</accession>
<accession>E1C6M7</accession>
<keyword id="KW-0009">Actin-binding</keyword>
<keyword id="KW-0963">Cytoplasm</keyword>
<keyword id="KW-0489">Methyltransferase</keyword>
<keyword id="KW-1185">Reference proteome</keyword>
<keyword id="KW-0949">S-adenosyl-L-methionine</keyword>
<keyword id="KW-0808">Transferase</keyword>
<comment type="function">
    <text evidence="1">Protein-histidine N-methyltransferase that specifically mediates 3-methylhistidine (tele-methylhistidine) methylation of actin at 'His-73'. Does not have protein-lysine N-methyltransferase activity and probably only catalyzes histidine methylation of actin.</text>
</comment>
<comment type="catalytic activity">
    <reaction evidence="1">
        <text>L-histidyl-[protein] + S-adenosyl-L-methionine = N(tele)-methyl-L-histidyl-[protein] + S-adenosyl-L-homocysteine + H(+)</text>
        <dbReference type="Rhea" id="RHEA:19369"/>
        <dbReference type="Rhea" id="RHEA-COMP:9745"/>
        <dbReference type="Rhea" id="RHEA-COMP:11600"/>
        <dbReference type="ChEBI" id="CHEBI:15378"/>
        <dbReference type="ChEBI" id="CHEBI:16367"/>
        <dbReference type="ChEBI" id="CHEBI:29979"/>
        <dbReference type="ChEBI" id="CHEBI:57856"/>
        <dbReference type="ChEBI" id="CHEBI:59789"/>
        <dbReference type="EC" id="2.1.1.85"/>
    </reaction>
</comment>
<comment type="subcellular location">
    <subcellularLocation>
        <location evidence="1">Cytoplasm</location>
    </subcellularLocation>
</comment>
<comment type="domain">
    <text evidence="1">The SET domain specifically recognizes and binds actin, suggesting that it does not accommodate substrates diverging from actin.</text>
</comment>
<comment type="similarity">
    <text evidence="3">Belongs to the class V-like SAM-binding methyltransferase superfamily. SETD3 actin-histidine methyltransferase family.</text>
</comment>
<organism>
    <name type="scientific">Gallus gallus</name>
    <name type="common">Chicken</name>
    <dbReference type="NCBI Taxonomy" id="9031"/>
    <lineage>
        <taxon>Eukaryota</taxon>
        <taxon>Metazoa</taxon>
        <taxon>Chordata</taxon>
        <taxon>Craniata</taxon>
        <taxon>Vertebrata</taxon>
        <taxon>Euteleostomi</taxon>
        <taxon>Archelosauria</taxon>
        <taxon>Archosauria</taxon>
        <taxon>Dinosauria</taxon>
        <taxon>Saurischia</taxon>
        <taxon>Theropoda</taxon>
        <taxon>Coelurosauria</taxon>
        <taxon>Aves</taxon>
        <taxon>Neognathae</taxon>
        <taxon>Galloanserae</taxon>
        <taxon>Galliformes</taxon>
        <taxon>Phasianidae</taxon>
        <taxon>Phasianinae</taxon>
        <taxon>Gallus</taxon>
    </lineage>
</organism>
<protein>
    <recommendedName>
        <fullName evidence="1">Actin-histidine N-methyltransferase</fullName>
        <ecNumber evidence="1">2.1.1.85</ecNumber>
    </recommendedName>
    <alternativeName>
        <fullName evidence="6">Protein-L-histidine N-tele-methyltransferase</fullName>
    </alternativeName>
    <alternativeName>
        <fullName evidence="6">SET domain-containing protein 3</fullName>
    </alternativeName>
</protein>
<name>SETD3_CHICK</name>
<feature type="chain" id="PRO_0000254177" description="Actin-histidine N-methyltransferase">
    <location>
        <begin position="1"/>
        <end position="593"/>
    </location>
</feature>
<feature type="domain" description="SET" evidence="2">
    <location>
        <begin position="94"/>
        <end position="314"/>
    </location>
</feature>
<feature type="region of interest" description="Disordered" evidence="4">
    <location>
        <begin position="1"/>
        <end position="21"/>
    </location>
</feature>
<feature type="region of interest" description="Disordered" evidence="4">
    <location>
        <begin position="549"/>
        <end position="593"/>
    </location>
</feature>
<feature type="compositionally biased region" description="Polar residues" evidence="4">
    <location>
        <begin position="553"/>
        <end position="562"/>
    </location>
</feature>
<feature type="compositionally biased region" description="Basic and acidic residues" evidence="4">
    <location>
        <begin position="563"/>
        <end position="593"/>
    </location>
</feature>
<feature type="binding site" evidence="1">
    <location>
        <position position="75"/>
    </location>
    <ligand>
        <name>S-adenosyl-L-methionine</name>
        <dbReference type="ChEBI" id="CHEBI:59789"/>
    </ligand>
</feature>
<feature type="binding site" evidence="1">
    <location>
        <begin position="104"/>
        <end position="106"/>
    </location>
    <ligand>
        <name>S-adenosyl-L-methionine</name>
        <dbReference type="ChEBI" id="CHEBI:59789"/>
    </ligand>
</feature>
<feature type="binding site" evidence="1">
    <location>
        <position position="254"/>
    </location>
    <ligand>
        <name>S-adenosyl-L-methionine</name>
        <dbReference type="ChEBI" id="CHEBI:59789"/>
    </ligand>
</feature>
<feature type="binding site" evidence="1">
    <location>
        <begin position="275"/>
        <end position="279"/>
    </location>
    <ligand>
        <name>S-adenosyl-L-methionine</name>
        <dbReference type="ChEBI" id="CHEBI:59789"/>
    </ligand>
</feature>
<feature type="binding site" evidence="1">
    <location>
        <begin position="325"/>
        <end position="327"/>
    </location>
    <ligand>
        <name>S-adenosyl-L-methionine</name>
        <dbReference type="ChEBI" id="CHEBI:59789"/>
    </ligand>
</feature>
<feature type="sequence conflict" description="In Ref. 2; AADN02003715/AADN02003714." evidence="6" ref="2">
    <original>Y</original>
    <variation>YS</variation>
    <location>
        <position position="244"/>
    </location>
</feature>
<evidence type="ECO:0000250" key="1">
    <source>
        <dbReference type="UniProtKB" id="Q86TU7"/>
    </source>
</evidence>
<evidence type="ECO:0000255" key="2">
    <source>
        <dbReference type="PROSITE-ProRule" id="PRU00190"/>
    </source>
</evidence>
<evidence type="ECO:0000255" key="3">
    <source>
        <dbReference type="PROSITE-ProRule" id="PRU00898"/>
    </source>
</evidence>
<evidence type="ECO:0000256" key="4">
    <source>
        <dbReference type="SAM" id="MobiDB-lite"/>
    </source>
</evidence>
<evidence type="ECO:0000303" key="5">
    <source>
    </source>
</evidence>
<evidence type="ECO:0000305" key="6"/>
<dbReference type="EC" id="2.1.1.85" evidence="1"/>
<dbReference type="EMBL" id="AJ719365">
    <property type="protein sequence ID" value="CAG31024.1"/>
    <property type="molecule type" value="mRNA"/>
</dbReference>
<dbReference type="EMBL" id="AADN02003714">
    <property type="status" value="NOT_ANNOTATED_CDS"/>
    <property type="molecule type" value="Genomic_DNA"/>
</dbReference>
<dbReference type="EMBL" id="AADN02003715">
    <property type="status" value="NOT_ANNOTATED_CDS"/>
    <property type="molecule type" value="Genomic_DNA"/>
</dbReference>
<dbReference type="RefSeq" id="NP_001006486.1">
    <property type="nucleotide sequence ID" value="NM_001006486.2"/>
</dbReference>
<dbReference type="RefSeq" id="XP_015142949.1">
    <property type="nucleotide sequence ID" value="XM_015287463.1"/>
</dbReference>
<dbReference type="RefSeq" id="XP_015142950.1">
    <property type="nucleotide sequence ID" value="XM_015287464.1"/>
</dbReference>
<dbReference type="RefSeq" id="XP_015142951.1">
    <property type="nucleotide sequence ID" value="XM_015287465.1"/>
</dbReference>
<dbReference type="RefSeq" id="XP_015142952.1">
    <property type="nucleotide sequence ID" value="XM_015287466.1"/>
</dbReference>
<dbReference type="RefSeq" id="XP_040556995.1">
    <property type="nucleotide sequence ID" value="XM_040701061.2"/>
</dbReference>
<dbReference type="RefSeq" id="XP_046774631.1">
    <property type="nucleotide sequence ID" value="XM_046918675.1"/>
</dbReference>
<dbReference type="RefSeq" id="XP_046774632.1">
    <property type="nucleotide sequence ID" value="XM_046918676.1"/>
</dbReference>
<dbReference type="RefSeq" id="XP_046774633.1">
    <property type="nucleotide sequence ID" value="XM_046918677.1"/>
</dbReference>
<dbReference type="RefSeq" id="XP_046774634.1">
    <property type="nucleotide sequence ID" value="XM_046918678.1"/>
</dbReference>
<dbReference type="RefSeq" id="XP_046774635.1">
    <property type="nucleotide sequence ID" value="XM_046918679.1"/>
</dbReference>
<dbReference type="RefSeq" id="XP_046774636.1">
    <property type="nucleotide sequence ID" value="XM_046918680.1"/>
</dbReference>
<dbReference type="RefSeq" id="XP_046797775.1">
    <property type="nucleotide sequence ID" value="XM_046941819.1"/>
</dbReference>
<dbReference type="RefSeq" id="XP_046797776.1">
    <property type="nucleotide sequence ID" value="XM_046941820.1"/>
</dbReference>
<dbReference type="RefSeq" id="XP_046797777.1">
    <property type="nucleotide sequence ID" value="XM_046941821.1"/>
</dbReference>
<dbReference type="RefSeq" id="XP_046797778.1">
    <property type="nucleotide sequence ID" value="XM_046941822.1"/>
</dbReference>
<dbReference type="RefSeq" id="XP_046797779.1">
    <property type="nucleotide sequence ID" value="XM_046941823.1"/>
</dbReference>
<dbReference type="SMR" id="Q5ZML9"/>
<dbReference type="FunCoup" id="Q5ZML9">
    <property type="interactions" value="926"/>
</dbReference>
<dbReference type="STRING" id="9031.ENSGALP00000050207"/>
<dbReference type="GlyGen" id="Q5ZML9">
    <property type="glycosylation" value="1 site"/>
</dbReference>
<dbReference type="PaxDb" id="9031-ENSGALP00000042532"/>
<dbReference type="Ensembl" id="ENSGALT00000083758">
    <property type="protein sequence ID" value="ENSGALP00000062671"/>
    <property type="gene ID" value="ENSGALG00000034802"/>
</dbReference>
<dbReference type="Ensembl" id="ENSGALT00010039331.1">
    <property type="protein sequence ID" value="ENSGALP00010022688.1"/>
    <property type="gene ID" value="ENSGALG00010016339.1"/>
</dbReference>
<dbReference type="GeneID" id="423445"/>
<dbReference type="KEGG" id="gga:423445"/>
<dbReference type="CTD" id="84193"/>
<dbReference type="VEuPathDB" id="HostDB:geneid_423445"/>
<dbReference type="eggNOG" id="KOG1337">
    <property type="taxonomic scope" value="Eukaryota"/>
</dbReference>
<dbReference type="GeneTree" id="ENSGT00940000153577"/>
<dbReference type="HOGENOM" id="CLU_028272_0_0_1"/>
<dbReference type="InParanoid" id="Q5ZML9"/>
<dbReference type="OrthoDB" id="441812at2759"/>
<dbReference type="PhylomeDB" id="Q5ZML9"/>
<dbReference type="PRO" id="PR:Q5ZML9"/>
<dbReference type="Proteomes" id="UP000000539">
    <property type="component" value="Chromosome 5"/>
</dbReference>
<dbReference type="GO" id="GO:0005737">
    <property type="term" value="C:cytoplasm"/>
    <property type="evidence" value="ECO:0000250"/>
    <property type="project" value="UniProtKB"/>
</dbReference>
<dbReference type="GO" id="GO:0003779">
    <property type="term" value="F:actin binding"/>
    <property type="evidence" value="ECO:0007669"/>
    <property type="project" value="UniProtKB-KW"/>
</dbReference>
<dbReference type="GO" id="GO:0046975">
    <property type="term" value="F:histone H3K36 methyltransferase activity"/>
    <property type="evidence" value="ECO:0000250"/>
    <property type="project" value="UniProtKB"/>
</dbReference>
<dbReference type="GO" id="GO:0018064">
    <property type="term" value="F:protein-L-histidine N-tele-methyltransferase activity"/>
    <property type="evidence" value="ECO:0000250"/>
    <property type="project" value="UniProtKB"/>
</dbReference>
<dbReference type="GO" id="GO:0003713">
    <property type="term" value="F:transcription coactivator activity"/>
    <property type="evidence" value="ECO:0000250"/>
    <property type="project" value="UniProtKB"/>
</dbReference>
<dbReference type="GO" id="GO:0030047">
    <property type="term" value="P:actin modification"/>
    <property type="evidence" value="ECO:0000250"/>
    <property type="project" value="UniProtKB"/>
</dbReference>
<dbReference type="GO" id="GO:0018021">
    <property type="term" value="P:peptidyl-histidine methylation"/>
    <property type="evidence" value="ECO:0000250"/>
    <property type="project" value="UniProtKB"/>
</dbReference>
<dbReference type="GO" id="GO:0045893">
    <property type="term" value="P:positive regulation of DNA-templated transcription"/>
    <property type="evidence" value="ECO:0000250"/>
    <property type="project" value="UniProtKB"/>
</dbReference>
<dbReference type="CDD" id="cd19176">
    <property type="entry name" value="SET_SETD3"/>
    <property type="match status" value="1"/>
</dbReference>
<dbReference type="FunFam" id="3.90.1410.10:FF:000001">
    <property type="entry name" value="histone-lysine N-methyltransferase setd3 isoform X1"/>
    <property type="match status" value="1"/>
</dbReference>
<dbReference type="FunFam" id="3.90.1420.10:FF:000001">
    <property type="entry name" value="histone-lysine N-methyltransferase setd3 isoform X1"/>
    <property type="match status" value="1"/>
</dbReference>
<dbReference type="Gene3D" id="3.90.1420.10">
    <property type="entry name" value="Rubisco LSMT, substrate-binding domain"/>
    <property type="match status" value="1"/>
</dbReference>
<dbReference type="Gene3D" id="3.90.1410.10">
    <property type="entry name" value="set domain protein methyltransferase, domain 1"/>
    <property type="match status" value="1"/>
</dbReference>
<dbReference type="InterPro" id="IPR015353">
    <property type="entry name" value="Rubisco_LSMT_subst-bd"/>
</dbReference>
<dbReference type="InterPro" id="IPR036464">
    <property type="entry name" value="Rubisco_LSMT_subst-bd_sf"/>
</dbReference>
<dbReference type="InterPro" id="IPR001214">
    <property type="entry name" value="SET_dom"/>
</dbReference>
<dbReference type="InterPro" id="IPR046341">
    <property type="entry name" value="SET_dom_sf"/>
</dbReference>
<dbReference type="InterPro" id="IPR025785">
    <property type="entry name" value="SETD3"/>
</dbReference>
<dbReference type="InterPro" id="IPR044428">
    <property type="entry name" value="SETD3_SET"/>
</dbReference>
<dbReference type="InterPro" id="IPR050600">
    <property type="entry name" value="SETD3_SETD6_MTase"/>
</dbReference>
<dbReference type="PANTHER" id="PTHR13271:SF47">
    <property type="entry name" value="ACTIN-HISTIDINE N-METHYLTRANSFERASE"/>
    <property type="match status" value="1"/>
</dbReference>
<dbReference type="PANTHER" id="PTHR13271">
    <property type="entry name" value="UNCHARACTERIZED PUTATIVE METHYLTRANSFERASE"/>
    <property type="match status" value="1"/>
</dbReference>
<dbReference type="Pfam" id="PF09273">
    <property type="entry name" value="Rubis-subs-bind"/>
    <property type="match status" value="1"/>
</dbReference>
<dbReference type="Pfam" id="PF00856">
    <property type="entry name" value="SET"/>
    <property type="match status" value="1"/>
</dbReference>
<dbReference type="SUPFAM" id="SSF81822">
    <property type="entry name" value="RuBisCo LSMT C-terminal, substrate-binding domain"/>
    <property type="match status" value="1"/>
</dbReference>
<dbReference type="SUPFAM" id="SSF82199">
    <property type="entry name" value="SET domain"/>
    <property type="match status" value="1"/>
</dbReference>
<dbReference type="PROSITE" id="PS51565">
    <property type="entry name" value="SAM_MT85_SETD3"/>
    <property type="match status" value="1"/>
</dbReference>
<dbReference type="PROSITE" id="PS50280">
    <property type="entry name" value="SET"/>
    <property type="match status" value="1"/>
</dbReference>
<sequence length="593" mass="67196">MGKKSRVKTQKSGTGATAAVSPKELLNLTSELLQKCSSPTPGPGKEWEEYIQIRSLVEKIRKKQKGLSVVFDGKRDDYFPELIKWATENGASTEGFEIANFEEEGFGLKATREIKAEELFLWVPRKLLMTVESAKNSVLGSLYSQDRILQAMGNITLAFHLLCERANPNSFWLPYIQTLPSEYDTPLYFEEDEVQYLRSTQAIHDVFSQYKNTARQYAYFYKVIQTHPNASKLPLKDSFTYDDYRWAVSSVMTRQNQIPTEDGSRVTLALIPLWDMCNHTNGLITTGYNLEDDRCECVALQDFKAGEQIYIFYGTRSNAEFVIHSGFFFDNNSHDRVKIKLGVSKSDRLYAMKAEVLARAGIPTSSVFALHSIEPPISAQLLAFLRVFCMNEEELKEHLIGEHAIDKIFTLGNSEFPISWDNEVKLWTFLEARASLLLKTYKTTVEDDKSFLETHDLTSHATMAIKLRLGEKEILEKAVKSAAASREYYTKQMADGAPLPKYEESNIALLENTVADSRLPIVLRNLDDVEEQGDLKIDEAMDAEVTENGFVNGENSLFNGTKSESENLIKEESNRETEDAKESSSESTDEVKE</sequence>
<reference key="1">
    <citation type="journal article" date="2005" name="Genome Biol.">
        <title>Full-length cDNAs from chicken bursal lymphocytes to facilitate gene function analysis.</title>
        <authorList>
            <person name="Caldwell R.B."/>
            <person name="Kierzek A.M."/>
            <person name="Arakawa H."/>
            <person name="Bezzubov Y."/>
            <person name="Zaim J."/>
            <person name="Fiedler P."/>
            <person name="Kutter S."/>
            <person name="Blagodatski A."/>
            <person name="Kostovska D."/>
            <person name="Koter M."/>
            <person name="Plachy J."/>
            <person name="Carninci P."/>
            <person name="Hayashizaki Y."/>
            <person name="Buerstedde J.-M."/>
        </authorList>
    </citation>
    <scope>NUCLEOTIDE SEQUENCE [LARGE SCALE MRNA]</scope>
    <source>
        <strain>CB</strain>
        <tissue>Bursa of Fabricius</tissue>
    </source>
</reference>
<reference key="2">
    <citation type="journal article" date="2004" name="Nature">
        <title>Sequence and comparative analysis of the chicken genome provide unique perspectives on vertebrate evolution.</title>
        <authorList>
            <person name="Hillier L.W."/>
            <person name="Miller W."/>
            <person name="Birney E."/>
            <person name="Warren W."/>
            <person name="Hardison R.C."/>
            <person name="Ponting C.P."/>
            <person name="Bork P."/>
            <person name="Burt D.W."/>
            <person name="Groenen M.A.M."/>
            <person name="Delany M.E."/>
            <person name="Dodgson J.B."/>
            <person name="Chinwalla A.T."/>
            <person name="Cliften P.F."/>
            <person name="Clifton S.W."/>
            <person name="Delehaunty K.D."/>
            <person name="Fronick C."/>
            <person name="Fulton R.S."/>
            <person name="Graves T.A."/>
            <person name="Kremitzki C."/>
            <person name="Layman D."/>
            <person name="Magrini V."/>
            <person name="McPherson J.D."/>
            <person name="Miner T.L."/>
            <person name="Minx P."/>
            <person name="Nash W.E."/>
            <person name="Nhan M.N."/>
            <person name="Nelson J.O."/>
            <person name="Oddy L.G."/>
            <person name="Pohl C.S."/>
            <person name="Randall-Maher J."/>
            <person name="Smith S.M."/>
            <person name="Wallis J.W."/>
            <person name="Yang S.-P."/>
            <person name="Romanov M.N."/>
            <person name="Rondelli C.M."/>
            <person name="Paton B."/>
            <person name="Smith J."/>
            <person name="Morrice D."/>
            <person name="Daniels L."/>
            <person name="Tempest H.G."/>
            <person name="Robertson L."/>
            <person name="Masabanda J.S."/>
            <person name="Griffin D.K."/>
            <person name="Vignal A."/>
            <person name="Fillon V."/>
            <person name="Jacobbson L."/>
            <person name="Kerje S."/>
            <person name="Andersson L."/>
            <person name="Crooijmans R.P."/>
            <person name="Aerts J."/>
            <person name="van der Poel J.J."/>
            <person name="Ellegren H."/>
            <person name="Caldwell R.B."/>
            <person name="Hubbard S.J."/>
            <person name="Grafham D.V."/>
            <person name="Kierzek A.M."/>
            <person name="McLaren S.R."/>
            <person name="Overton I.M."/>
            <person name="Arakawa H."/>
            <person name="Beattie K.J."/>
            <person name="Bezzubov Y."/>
            <person name="Boardman P.E."/>
            <person name="Bonfield J.K."/>
            <person name="Croning M.D.R."/>
            <person name="Davies R.M."/>
            <person name="Francis M.D."/>
            <person name="Humphray S.J."/>
            <person name="Scott C.E."/>
            <person name="Taylor R.G."/>
            <person name="Tickle C."/>
            <person name="Brown W.R.A."/>
            <person name="Rogers J."/>
            <person name="Buerstedde J.-M."/>
            <person name="Wilson S.A."/>
            <person name="Stubbs L."/>
            <person name="Ovcharenko I."/>
            <person name="Gordon L."/>
            <person name="Lucas S."/>
            <person name="Miller M.M."/>
            <person name="Inoko H."/>
            <person name="Shiina T."/>
            <person name="Kaufman J."/>
            <person name="Salomonsen J."/>
            <person name="Skjoedt K."/>
            <person name="Wong G.K.-S."/>
            <person name="Wang J."/>
            <person name="Liu B."/>
            <person name="Wang J."/>
            <person name="Yu J."/>
            <person name="Yang H."/>
            <person name="Nefedov M."/>
            <person name="Koriabine M."/>
            <person name="Dejong P.J."/>
            <person name="Goodstadt L."/>
            <person name="Webber C."/>
            <person name="Dickens N.J."/>
            <person name="Letunic I."/>
            <person name="Suyama M."/>
            <person name="Torrents D."/>
            <person name="von Mering C."/>
            <person name="Zdobnov E.M."/>
            <person name="Makova K."/>
            <person name="Nekrutenko A."/>
            <person name="Elnitski L."/>
            <person name="Eswara P."/>
            <person name="King D.C."/>
            <person name="Yang S.-P."/>
            <person name="Tyekucheva S."/>
            <person name="Radakrishnan A."/>
            <person name="Harris R.S."/>
            <person name="Chiaromonte F."/>
            <person name="Taylor J."/>
            <person name="He J."/>
            <person name="Rijnkels M."/>
            <person name="Griffiths-Jones S."/>
            <person name="Ureta-Vidal A."/>
            <person name="Hoffman M.M."/>
            <person name="Severin J."/>
            <person name="Searle S.M.J."/>
            <person name="Law A.S."/>
            <person name="Speed D."/>
            <person name="Waddington D."/>
            <person name="Cheng Z."/>
            <person name="Tuzun E."/>
            <person name="Eichler E."/>
            <person name="Bao Z."/>
            <person name="Flicek P."/>
            <person name="Shteynberg D.D."/>
            <person name="Brent M.R."/>
            <person name="Bye J.M."/>
            <person name="Huckle E.J."/>
            <person name="Chatterji S."/>
            <person name="Dewey C."/>
            <person name="Pachter L."/>
            <person name="Kouranov A."/>
            <person name="Mourelatos Z."/>
            <person name="Hatzigeorgiou A.G."/>
            <person name="Paterson A.H."/>
            <person name="Ivarie R."/>
            <person name="Brandstrom M."/>
            <person name="Axelsson E."/>
            <person name="Backstrom N."/>
            <person name="Berlin S."/>
            <person name="Webster M.T."/>
            <person name="Pourquie O."/>
            <person name="Reymond A."/>
            <person name="Ucla C."/>
            <person name="Antonarakis S.E."/>
            <person name="Long M."/>
            <person name="Emerson J.J."/>
            <person name="Betran E."/>
            <person name="Dupanloup I."/>
            <person name="Kaessmann H."/>
            <person name="Hinrichs A.S."/>
            <person name="Bejerano G."/>
            <person name="Furey T.S."/>
            <person name="Harte R.A."/>
            <person name="Raney B."/>
            <person name="Siepel A."/>
            <person name="Kent W.J."/>
            <person name="Haussler D."/>
            <person name="Eyras E."/>
            <person name="Castelo R."/>
            <person name="Abril J.F."/>
            <person name="Castellano S."/>
            <person name="Camara F."/>
            <person name="Parra G."/>
            <person name="Guigo R."/>
            <person name="Bourque G."/>
            <person name="Tesler G."/>
            <person name="Pevzner P.A."/>
            <person name="Smit A."/>
            <person name="Fulton L.A."/>
            <person name="Mardis E.R."/>
            <person name="Wilson R.K."/>
        </authorList>
    </citation>
    <scope>NUCLEOTIDE SEQUENCE [LARGE SCALE GENOMIC DNA]</scope>
    <source>
        <strain>Red jungle fowl</strain>
    </source>
</reference>
<gene>
    <name evidence="1" type="primary">SETD3</name>
    <name evidence="5" type="ORF">RCJMB04_1k10</name>
</gene>
<proteinExistence type="evidence at transcript level"/>